<comment type="function">
    <text evidence="1">Catalyzes the sequential NAD-dependent oxidations of L-histidinol to L-histidinaldehyde and then to L-histidine.</text>
</comment>
<comment type="catalytic activity">
    <reaction evidence="1">
        <text>L-histidinol + 2 NAD(+) + H2O = L-histidine + 2 NADH + 3 H(+)</text>
        <dbReference type="Rhea" id="RHEA:20641"/>
        <dbReference type="ChEBI" id="CHEBI:15377"/>
        <dbReference type="ChEBI" id="CHEBI:15378"/>
        <dbReference type="ChEBI" id="CHEBI:57540"/>
        <dbReference type="ChEBI" id="CHEBI:57595"/>
        <dbReference type="ChEBI" id="CHEBI:57699"/>
        <dbReference type="ChEBI" id="CHEBI:57945"/>
        <dbReference type="EC" id="1.1.1.23"/>
    </reaction>
</comment>
<comment type="cofactor">
    <cofactor evidence="1">
        <name>Zn(2+)</name>
        <dbReference type="ChEBI" id="CHEBI:29105"/>
    </cofactor>
    <text evidence="1">Binds 1 zinc ion per subunit.</text>
</comment>
<comment type="pathway">
    <text evidence="1">Amino-acid biosynthesis; L-histidine biosynthesis; L-histidine from 5-phospho-alpha-D-ribose 1-diphosphate: step 9/9.</text>
</comment>
<comment type="similarity">
    <text evidence="1">Belongs to the histidinol dehydrogenase family.</text>
</comment>
<keyword id="KW-0028">Amino-acid biosynthesis</keyword>
<keyword id="KW-0368">Histidine biosynthesis</keyword>
<keyword id="KW-0479">Metal-binding</keyword>
<keyword id="KW-0520">NAD</keyword>
<keyword id="KW-0560">Oxidoreductase</keyword>
<keyword id="KW-1185">Reference proteome</keyword>
<keyword id="KW-0862">Zinc</keyword>
<proteinExistence type="inferred from homology"/>
<organism>
    <name type="scientific">Wolinella succinogenes (strain ATCC 29543 / DSM 1740 / CCUG 13145 / JCM 31913 / LMG 7466 / NCTC 11488 / FDC 602W)</name>
    <name type="common">Vibrio succinogenes</name>
    <dbReference type="NCBI Taxonomy" id="273121"/>
    <lineage>
        <taxon>Bacteria</taxon>
        <taxon>Pseudomonadati</taxon>
        <taxon>Campylobacterota</taxon>
        <taxon>Epsilonproteobacteria</taxon>
        <taxon>Campylobacterales</taxon>
        <taxon>Helicobacteraceae</taxon>
        <taxon>Wolinella</taxon>
    </lineage>
</organism>
<dbReference type="EC" id="1.1.1.23" evidence="1"/>
<dbReference type="EMBL" id="BX571661">
    <property type="protein sequence ID" value="CAE10626.1"/>
    <property type="molecule type" value="Genomic_DNA"/>
</dbReference>
<dbReference type="RefSeq" id="WP_011139410.1">
    <property type="nucleotide sequence ID" value="NC_005090.1"/>
</dbReference>
<dbReference type="SMR" id="Q7M8K9"/>
<dbReference type="STRING" id="273121.WS1587"/>
<dbReference type="KEGG" id="wsu:WS1587"/>
<dbReference type="eggNOG" id="COG0141">
    <property type="taxonomic scope" value="Bacteria"/>
</dbReference>
<dbReference type="HOGENOM" id="CLU_006732_3_3_7"/>
<dbReference type="UniPathway" id="UPA00031">
    <property type="reaction ID" value="UER00014"/>
</dbReference>
<dbReference type="Proteomes" id="UP000000422">
    <property type="component" value="Chromosome"/>
</dbReference>
<dbReference type="GO" id="GO:0005829">
    <property type="term" value="C:cytosol"/>
    <property type="evidence" value="ECO:0007669"/>
    <property type="project" value="TreeGrafter"/>
</dbReference>
<dbReference type="GO" id="GO:0004399">
    <property type="term" value="F:histidinol dehydrogenase activity"/>
    <property type="evidence" value="ECO:0007669"/>
    <property type="project" value="UniProtKB-UniRule"/>
</dbReference>
<dbReference type="GO" id="GO:0051287">
    <property type="term" value="F:NAD binding"/>
    <property type="evidence" value="ECO:0007669"/>
    <property type="project" value="InterPro"/>
</dbReference>
<dbReference type="GO" id="GO:0008270">
    <property type="term" value="F:zinc ion binding"/>
    <property type="evidence" value="ECO:0007669"/>
    <property type="project" value="UniProtKB-UniRule"/>
</dbReference>
<dbReference type="GO" id="GO:0000105">
    <property type="term" value="P:L-histidine biosynthetic process"/>
    <property type="evidence" value="ECO:0007669"/>
    <property type="project" value="UniProtKB-UniRule"/>
</dbReference>
<dbReference type="CDD" id="cd06572">
    <property type="entry name" value="Histidinol_dh"/>
    <property type="match status" value="1"/>
</dbReference>
<dbReference type="FunFam" id="3.40.50.1980:FF:000001">
    <property type="entry name" value="Histidinol dehydrogenase"/>
    <property type="match status" value="1"/>
</dbReference>
<dbReference type="FunFam" id="3.40.50.1980:FF:000026">
    <property type="entry name" value="Histidinol dehydrogenase"/>
    <property type="match status" value="1"/>
</dbReference>
<dbReference type="Gene3D" id="1.20.5.1300">
    <property type="match status" value="1"/>
</dbReference>
<dbReference type="Gene3D" id="3.40.50.1980">
    <property type="entry name" value="Nitrogenase molybdenum iron protein domain"/>
    <property type="match status" value="2"/>
</dbReference>
<dbReference type="HAMAP" id="MF_01024">
    <property type="entry name" value="HisD"/>
    <property type="match status" value="1"/>
</dbReference>
<dbReference type="InterPro" id="IPR016161">
    <property type="entry name" value="Ald_DH/histidinol_DH"/>
</dbReference>
<dbReference type="InterPro" id="IPR001692">
    <property type="entry name" value="Histidinol_DH_CS"/>
</dbReference>
<dbReference type="InterPro" id="IPR022695">
    <property type="entry name" value="Histidinol_DH_monofunct"/>
</dbReference>
<dbReference type="InterPro" id="IPR012131">
    <property type="entry name" value="Hstdl_DH"/>
</dbReference>
<dbReference type="NCBIfam" id="TIGR00069">
    <property type="entry name" value="hisD"/>
    <property type="match status" value="1"/>
</dbReference>
<dbReference type="PANTHER" id="PTHR21256:SF2">
    <property type="entry name" value="HISTIDINE BIOSYNTHESIS TRIFUNCTIONAL PROTEIN"/>
    <property type="match status" value="1"/>
</dbReference>
<dbReference type="PANTHER" id="PTHR21256">
    <property type="entry name" value="HISTIDINOL DEHYDROGENASE HDH"/>
    <property type="match status" value="1"/>
</dbReference>
<dbReference type="Pfam" id="PF00815">
    <property type="entry name" value="Histidinol_dh"/>
    <property type="match status" value="1"/>
</dbReference>
<dbReference type="PIRSF" id="PIRSF000099">
    <property type="entry name" value="Histidinol_dh"/>
    <property type="match status" value="1"/>
</dbReference>
<dbReference type="PRINTS" id="PR00083">
    <property type="entry name" value="HOLDHDRGNASE"/>
</dbReference>
<dbReference type="SUPFAM" id="SSF53720">
    <property type="entry name" value="ALDH-like"/>
    <property type="match status" value="1"/>
</dbReference>
<dbReference type="PROSITE" id="PS00611">
    <property type="entry name" value="HISOL_DEHYDROGENASE"/>
    <property type="match status" value="1"/>
</dbReference>
<feature type="chain" id="PRO_0000135879" description="Histidinol dehydrogenase">
    <location>
        <begin position="1"/>
        <end position="432"/>
    </location>
</feature>
<feature type="active site" description="Proton acceptor" evidence="1">
    <location>
        <position position="330"/>
    </location>
</feature>
<feature type="active site" description="Proton acceptor" evidence="1">
    <location>
        <position position="331"/>
    </location>
</feature>
<feature type="binding site" evidence="1">
    <location>
        <position position="240"/>
    </location>
    <ligand>
        <name>substrate</name>
    </ligand>
</feature>
<feature type="binding site" evidence="1">
    <location>
        <position position="262"/>
    </location>
    <ligand>
        <name>substrate</name>
    </ligand>
</feature>
<feature type="binding site" evidence="1">
    <location>
        <position position="262"/>
    </location>
    <ligand>
        <name>Zn(2+)</name>
        <dbReference type="ChEBI" id="CHEBI:29105"/>
    </ligand>
</feature>
<feature type="binding site" evidence="1">
    <location>
        <position position="265"/>
    </location>
    <ligand>
        <name>substrate</name>
    </ligand>
</feature>
<feature type="binding site" evidence="1">
    <location>
        <position position="265"/>
    </location>
    <ligand>
        <name>Zn(2+)</name>
        <dbReference type="ChEBI" id="CHEBI:29105"/>
    </ligand>
</feature>
<feature type="binding site" evidence="1">
    <location>
        <position position="331"/>
    </location>
    <ligand>
        <name>substrate</name>
    </ligand>
</feature>
<feature type="binding site" evidence="1">
    <location>
        <position position="364"/>
    </location>
    <ligand>
        <name>substrate</name>
    </ligand>
</feature>
<feature type="binding site" evidence="1">
    <location>
        <position position="364"/>
    </location>
    <ligand>
        <name>Zn(2+)</name>
        <dbReference type="ChEBI" id="CHEBI:29105"/>
    </ligand>
</feature>
<feature type="binding site" evidence="1">
    <location>
        <position position="418"/>
    </location>
    <ligand>
        <name>substrate</name>
    </ligand>
</feature>
<feature type="binding site" evidence="1">
    <location>
        <position position="423"/>
    </location>
    <ligand>
        <name>substrate</name>
    </ligand>
</feature>
<feature type="binding site" evidence="1">
    <location>
        <position position="423"/>
    </location>
    <ligand>
        <name>Zn(2+)</name>
        <dbReference type="ChEBI" id="CHEBI:29105"/>
    </ligand>
</feature>
<sequence length="432" mass="47077">MRKIKRLNSSLAEFRREFDELLLRGNVDMDTVIPVVSGLIKEIRTQGDAALLAHVAKFDRWNPKSAMELKIDPSLMKRAYEGLEASLREALHSAYNRIHSFHSKQKPQSWLDFEENGTILGQKVTPMDRAGLYIPGGKAAYPSSLLMNAIPAIVAGVKEIVVCTPTPENEPNELLLAACHLCGIKEVYKVGGASAIAAMAYGTESLGRVDVITGPGNIYVATAKKLVFGQVNIDMVAGPSEIGILADESAKAPWVALDLLSQAEHDEMASSILVTPSVELADAVDVEVERALERLDRKEISSKSIYTRGAIIIAKDMNEAVSLMNEIAPEHLEVLVENPFGWLPEIRHAGAIFLGENTPEPIGDYIAGPNHTLPTGGTARFYSPLSTEHFMKKSSILSFSERGIRELGHHCAKLAQTEGLDAHKESVLARLV</sequence>
<protein>
    <recommendedName>
        <fullName evidence="1">Histidinol dehydrogenase</fullName>
        <shortName evidence="1">HDH</shortName>
        <ecNumber evidence="1">1.1.1.23</ecNumber>
    </recommendedName>
</protein>
<reference key="1">
    <citation type="journal article" date="2003" name="Proc. Natl. Acad. Sci. U.S.A.">
        <title>Complete genome sequence and analysis of Wolinella succinogenes.</title>
        <authorList>
            <person name="Baar C."/>
            <person name="Eppinger M."/>
            <person name="Raddatz G."/>
            <person name="Simon J."/>
            <person name="Lanz C."/>
            <person name="Klimmek O."/>
            <person name="Nandakumar R."/>
            <person name="Gross R."/>
            <person name="Rosinus A."/>
            <person name="Keller H."/>
            <person name="Jagtap P."/>
            <person name="Linke B."/>
            <person name="Meyer F."/>
            <person name="Lederer H."/>
            <person name="Schuster S.C."/>
        </authorList>
    </citation>
    <scope>NUCLEOTIDE SEQUENCE [LARGE SCALE GENOMIC DNA]</scope>
    <source>
        <strain>ATCC 29543 / DSM 1740 / CCUG 13145 / JCM 31913 / LMG 7466 / NCTC 11488 / FDC 602W</strain>
    </source>
</reference>
<name>HISX_WOLSU</name>
<gene>
    <name evidence="1" type="primary">hisD</name>
    <name type="ordered locus">WS1587</name>
</gene>
<evidence type="ECO:0000255" key="1">
    <source>
        <dbReference type="HAMAP-Rule" id="MF_01024"/>
    </source>
</evidence>
<accession>Q7M8K9</accession>